<comment type="function">
    <text evidence="1">Catalyzes the formation of acetyl phosphate from acetate and ATP. Can also catalyze the reverse reaction.</text>
</comment>
<comment type="catalytic activity">
    <reaction evidence="1">
        <text>acetate + ATP = acetyl phosphate + ADP</text>
        <dbReference type="Rhea" id="RHEA:11352"/>
        <dbReference type="ChEBI" id="CHEBI:22191"/>
        <dbReference type="ChEBI" id="CHEBI:30089"/>
        <dbReference type="ChEBI" id="CHEBI:30616"/>
        <dbReference type="ChEBI" id="CHEBI:456216"/>
        <dbReference type="EC" id="2.7.2.1"/>
    </reaction>
</comment>
<comment type="cofactor">
    <cofactor evidence="1">
        <name>Mg(2+)</name>
        <dbReference type="ChEBI" id="CHEBI:18420"/>
    </cofactor>
    <cofactor evidence="1">
        <name>Mn(2+)</name>
        <dbReference type="ChEBI" id="CHEBI:29035"/>
    </cofactor>
    <text evidence="1">Mg(2+). Can also accept Mn(2+).</text>
</comment>
<comment type="pathway">
    <text evidence="1">Metabolic intermediate biosynthesis; acetyl-CoA biosynthesis; acetyl-CoA from acetate: step 1/2.</text>
</comment>
<comment type="subunit">
    <text evidence="1">Homodimer.</text>
</comment>
<comment type="subcellular location">
    <subcellularLocation>
        <location evidence="1">Cytoplasm</location>
    </subcellularLocation>
</comment>
<comment type="similarity">
    <text evidence="1">Belongs to the acetokinase family.</text>
</comment>
<reference key="1">
    <citation type="journal article" date="2008" name="Genome Biol.">
        <title>Encapsulated in silica: genome, proteome and physiology of the thermophilic bacterium Anoxybacillus flavithermus WK1.</title>
        <authorList>
            <person name="Saw J.H."/>
            <person name="Mountain B.W."/>
            <person name="Feng L."/>
            <person name="Omelchenko M.V."/>
            <person name="Hou S."/>
            <person name="Saito J.A."/>
            <person name="Stott M.B."/>
            <person name="Li D."/>
            <person name="Zhao G."/>
            <person name="Wu J."/>
            <person name="Galperin M.Y."/>
            <person name="Koonin E.V."/>
            <person name="Makarova K.S."/>
            <person name="Wolf Y.I."/>
            <person name="Rigden D.J."/>
            <person name="Dunfield P.F."/>
            <person name="Wang L."/>
            <person name="Alam M."/>
        </authorList>
    </citation>
    <scope>NUCLEOTIDE SEQUENCE [LARGE SCALE GENOMIC DNA]</scope>
    <source>
        <strain>DSM 21510 / WK1</strain>
    </source>
</reference>
<name>ACKA_ANOFW</name>
<sequence length="397" mass="43349">MPKVIAINAGSSSLKFQLFNMPSEEVLTKGVVERIGFEDAIFNITVNGEKIKEVTPIPDHAVAVKMLLDKLIELGIIQSFDEIEGIGHRVVHGGEKFSDSVLITDETLKEIEDLSDLAPLHNPANVVGIKAFREVLPNVPAVAVFDTAFHQTMPEQSFLYSLPYEYYEKFGIRKYGFHGTSHKYVTQRAAELLGRPIEQLRLISCHLGNGASIAAVEGGKSIDTSMGFTPLAGVAMGTRSGNIDPALIPYIMQKTGKTAEEVIDILNKKSGMLGLTGFSSDLRDIEEAAAKGDQRAELALEVFAGRIHKYIGSYAARMCGVDAIIFTAGIGENSDIVRAKVLRGLEFMGVYWDPALNKVRGKEAFISYPHSPVKVLVIPTNEEVMIARDVMRLANLA</sequence>
<accession>B7GGR2</accession>
<protein>
    <recommendedName>
        <fullName evidence="1">Acetate kinase</fullName>
        <ecNumber evidence="1">2.7.2.1</ecNumber>
    </recommendedName>
    <alternativeName>
        <fullName evidence="1">Acetokinase</fullName>
    </alternativeName>
</protein>
<evidence type="ECO:0000255" key="1">
    <source>
        <dbReference type="HAMAP-Rule" id="MF_00020"/>
    </source>
</evidence>
<feature type="chain" id="PRO_1000116385" description="Acetate kinase">
    <location>
        <begin position="1"/>
        <end position="397"/>
    </location>
</feature>
<feature type="active site" description="Proton donor/acceptor" evidence="1">
    <location>
        <position position="146"/>
    </location>
</feature>
<feature type="binding site" evidence="1">
    <location>
        <position position="8"/>
    </location>
    <ligand>
        <name>Mg(2+)</name>
        <dbReference type="ChEBI" id="CHEBI:18420"/>
    </ligand>
</feature>
<feature type="binding site" evidence="1">
    <location>
        <position position="15"/>
    </location>
    <ligand>
        <name>ATP</name>
        <dbReference type="ChEBI" id="CHEBI:30616"/>
    </ligand>
</feature>
<feature type="binding site" evidence="1">
    <location>
        <position position="89"/>
    </location>
    <ligand>
        <name>substrate</name>
    </ligand>
</feature>
<feature type="binding site" evidence="1">
    <location>
        <begin position="206"/>
        <end position="210"/>
    </location>
    <ligand>
        <name>ATP</name>
        <dbReference type="ChEBI" id="CHEBI:30616"/>
    </ligand>
</feature>
<feature type="binding site" evidence="1">
    <location>
        <begin position="281"/>
        <end position="283"/>
    </location>
    <ligand>
        <name>ATP</name>
        <dbReference type="ChEBI" id="CHEBI:30616"/>
    </ligand>
</feature>
<feature type="binding site" evidence="1">
    <location>
        <begin position="329"/>
        <end position="333"/>
    </location>
    <ligand>
        <name>ATP</name>
        <dbReference type="ChEBI" id="CHEBI:30616"/>
    </ligand>
</feature>
<feature type="binding site" evidence="1">
    <location>
        <position position="382"/>
    </location>
    <ligand>
        <name>Mg(2+)</name>
        <dbReference type="ChEBI" id="CHEBI:18420"/>
    </ligand>
</feature>
<feature type="site" description="Transition state stabilizer" evidence="1">
    <location>
        <position position="178"/>
    </location>
</feature>
<feature type="site" description="Transition state stabilizer" evidence="1">
    <location>
        <position position="239"/>
    </location>
</feature>
<keyword id="KW-0067">ATP-binding</keyword>
<keyword id="KW-0963">Cytoplasm</keyword>
<keyword id="KW-0418">Kinase</keyword>
<keyword id="KW-0460">Magnesium</keyword>
<keyword id="KW-0479">Metal-binding</keyword>
<keyword id="KW-0547">Nucleotide-binding</keyword>
<keyword id="KW-0808">Transferase</keyword>
<organism>
    <name type="scientific">Anoxybacillus flavithermus (strain DSM 21510 / WK1)</name>
    <dbReference type="NCBI Taxonomy" id="491915"/>
    <lineage>
        <taxon>Bacteria</taxon>
        <taxon>Bacillati</taxon>
        <taxon>Bacillota</taxon>
        <taxon>Bacilli</taxon>
        <taxon>Bacillales</taxon>
        <taxon>Anoxybacillaceae</taxon>
        <taxon>Anoxybacillus</taxon>
    </lineage>
</organism>
<dbReference type="EC" id="2.7.2.1" evidence="1"/>
<dbReference type="EMBL" id="CP000922">
    <property type="protein sequence ID" value="ACJ32864.1"/>
    <property type="molecule type" value="Genomic_DNA"/>
</dbReference>
<dbReference type="RefSeq" id="WP_012574185.1">
    <property type="nucleotide sequence ID" value="NC_011567.1"/>
</dbReference>
<dbReference type="SMR" id="B7GGR2"/>
<dbReference type="STRING" id="491915.Aflv_0480"/>
<dbReference type="GeneID" id="7036737"/>
<dbReference type="KEGG" id="afl:Aflv_0480"/>
<dbReference type="PATRIC" id="fig|491915.6.peg.492"/>
<dbReference type="eggNOG" id="COG0282">
    <property type="taxonomic scope" value="Bacteria"/>
</dbReference>
<dbReference type="HOGENOM" id="CLU_020352_0_1_9"/>
<dbReference type="UniPathway" id="UPA00340">
    <property type="reaction ID" value="UER00458"/>
</dbReference>
<dbReference type="Proteomes" id="UP000000742">
    <property type="component" value="Chromosome"/>
</dbReference>
<dbReference type="GO" id="GO:0005737">
    <property type="term" value="C:cytoplasm"/>
    <property type="evidence" value="ECO:0007669"/>
    <property type="project" value="UniProtKB-SubCell"/>
</dbReference>
<dbReference type="GO" id="GO:0008776">
    <property type="term" value="F:acetate kinase activity"/>
    <property type="evidence" value="ECO:0007669"/>
    <property type="project" value="UniProtKB-UniRule"/>
</dbReference>
<dbReference type="GO" id="GO:0005524">
    <property type="term" value="F:ATP binding"/>
    <property type="evidence" value="ECO:0007669"/>
    <property type="project" value="UniProtKB-KW"/>
</dbReference>
<dbReference type="GO" id="GO:0000287">
    <property type="term" value="F:magnesium ion binding"/>
    <property type="evidence" value="ECO:0007669"/>
    <property type="project" value="UniProtKB-UniRule"/>
</dbReference>
<dbReference type="GO" id="GO:0006083">
    <property type="term" value="P:acetate metabolic process"/>
    <property type="evidence" value="ECO:0007669"/>
    <property type="project" value="TreeGrafter"/>
</dbReference>
<dbReference type="GO" id="GO:0006085">
    <property type="term" value="P:acetyl-CoA biosynthetic process"/>
    <property type="evidence" value="ECO:0007669"/>
    <property type="project" value="UniProtKB-UniRule"/>
</dbReference>
<dbReference type="CDD" id="cd24010">
    <property type="entry name" value="ASKHA_NBD_AcK_PK"/>
    <property type="match status" value="1"/>
</dbReference>
<dbReference type="Gene3D" id="3.30.420.40">
    <property type="match status" value="2"/>
</dbReference>
<dbReference type="HAMAP" id="MF_00020">
    <property type="entry name" value="Acetate_kinase"/>
    <property type="match status" value="1"/>
</dbReference>
<dbReference type="InterPro" id="IPR004372">
    <property type="entry name" value="Ac/propionate_kinase"/>
</dbReference>
<dbReference type="InterPro" id="IPR000890">
    <property type="entry name" value="Aliphatic_acid_kin_short-chain"/>
</dbReference>
<dbReference type="InterPro" id="IPR023865">
    <property type="entry name" value="Aliphatic_acid_kinase_CS"/>
</dbReference>
<dbReference type="InterPro" id="IPR043129">
    <property type="entry name" value="ATPase_NBD"/>
</dbReference>
<dbReference type="NCBIfam" id="TIGR00016">
    <property type="entry name" value="ackA"/>
    <property type="match status" value="1"/>
</dbReference>
<dbReference type="PANTHER" id="PTHR21060">
    <property type="entry name" value="ACETATE KINASE"/>
    <property type="match status" value="1"/>
</dbReference>
<dbReference type="PANTHER" id="PTHR21060:SF15">
    <property type="entry name" value="ACETATE KINASE-RELATED"/>
    <property type="match status" value="1"/>
</dbReference>
<dbReference type="Pfam" id="PF00871">
    <property type="entry name" value="Acetate_kinase"/>
    <property type="match status" value="1"/>
</dbReference>
<dbReference type="PIRSF" id="PIRSF000722">
    <property type="entry name" value="Acetate_prop_kin"/>
    <property type="match status" value="1"/>
</dbReference>
<dbReference type="PRINTS" id="PR00471">
    <property type="entry name" value="ACETATEKNASE"/>
</dbReference>
<dbReference type="SUPFAM" id="SSF53067">
    <property type="entry name" value="Actin-like ATPase domain"/>
    <property type="match status" value="2"/>
</dbReference>
<dbReference type="PROSITE" id="PS01075">
    <property type="entry name" value="ACETATE_KINASE_1"/>
    <property type="match status" value="1"/>
</dbReference>
<dbReference type="PROSITE" id="PS01076">
    <property type="entry name" value="ACETATE_KINASE_2"/>
    <property type="match status" value="1"/>
</dbReference>
<gene>
    <name evidence="1" type="primary">ackA</name>
    <name type="ordered locus">Aflv_0480</name>
</gene>
<proteinExistence type="inferred from homology"/>